<name>INAR1_SHEEP</name>
<protein>
    <recommendedName>
        <fullName>Interferon alpha/beta receptor 1</fullName>
        <shortName>IFN-R-1</shortName>
        <shortName>IFN-alpha/beta receptor 1</shortName>
    </recommendedName>
    <alternativeName>
        <fullName>Type I interferon receptor 1</fullName>
    </alternativeName>
</protein>
<proteinExistence type="evidence at transcript level"/>
<gene>
    <name type="primary">IFNAR1</name>
    <name type="synonym">IFNAR</name>
</gene>
<dbReference type="EMBL" id="X95939">
    <property type="protein sequence ID" value="CAA65183.1"/>
    <property type="molecule type" value="mRNA"/>
</dbReference>
<dbReference type="EMBL" id="U65978">
    <property type="protein sequence ID" value="AAB84231.1"/>
    <property type="molecule type" value="mRNA"/>
</dbReference>
<dbReference type="SMR" id="Q28589"/>
<dbReference type="STRING" id="9940.ENSOARP00000014132"/>
<dbReference type="GlyCosmos" id="Q28589">
    <property type="glycosylation" value="12 sites, No reported glycans"/>
</dbReference>
<dbReference type="PaxDb" id="9940-ENSOARP00000014132"/>
<dbReference type="eggNOG" id="ENOG502RISU">
    <property type="taxonomic scope" value="Eukaryota"/>
</dbReference>
<dbReference type="Proteomes" id="UP000002356">
    <property type="component" value="Unplaced"/>
</dbReference>
<dbReference type="GO" id="GO:0005770">
    <property type="term" value="C:late endosome"/>
    <property type="evidence" value="ECO:0007669"/>
    <property type="project" value="UniProtKB-SubCell"/>
</dbReference>
<dbReference type="GO" id="GO:0005764">
    <property type="term" value="C:lysosome"/>
    <property type="evidence" value="ECO:0007669"/>
    <property type="project" value="UniProtKB-SubCell"/>
</dbReference>
<dbReference type="GO" id="GO:0005886">
    <property type="term" value="C:plasma membrane"/>
    <property type="evidence" value="ECO:0000250"/>
    <property type="project" value="UniProtKB"/>
</dbReference>
<dbReference type="GO" id="GO:0019962">
    <property type="term" value="F:type I interferon binding"/>
    <property type="evidence" value="ECO:0000250"/>
    <property type="project" value="UniProtKB"/>
</dbReference>
<dbReference type="GO" id="GO:0004905">
    <property type="term" value="F:type I interferon receptor activity"/>
    <property type="evidence" value="ECO:0000250"/>
    <property type="project" value="UniProtKB"/>
</dbReference>
<dbReference type="GO" id="GO:0035457">
    <property type="term" value="P:cellular response to interferon-alpha"/>
    <property type="evidence" value="ECO:0000250"/>
    <property type="project" value="UniProtKB"/>
</dbReference>
<dbReference type="GO" id="GO:0032496">
    <property type="term" value="P:response to lipopolysaccharide"/>
    <property type="evidence" value="ECO:0000250"/>
    <property type="project" value="UniProtKB"/>
</dbReference>
<dbReference type="GO" id="GO:0060337">
    <property type="term" value="P:type I interferon-mediated signaling pathway"/>
    <property type="evidence" value="ECO:0000250"/>
    <property type="project" value="UniProtKB"/>
</dbReference>
<dbReference type="CDD" id="cd00063">
    <property type="entry name" value="FN3"/>
    <property type="match status" value="2"/>
</dbReference>
<dbReference type="FunFam" id="2.60.40.10:FF:000842">
    <property type="entry name" value="Interferon receptor 1 isoform 4"/>
    <property type="match status" value="2"/>
</dbReference>
<dbReference type="FunFam" id="2.60.40.10:FF:001548">
    <property type="entry name" value="Interferon receptor 1 isoform 4"/>
    <property type="match status" value="1"/>
</dbReference>
<dbReference type="FunFam" id="2.60.40.10:FF:001563">
    <property type="entry name" value="Interferon receptor 1 isoform 4"/>
    <property type="match status" value="1"/>
</dbReference>
<dbReference type="Gene3D" id="2.60.40.10">
    <property type="entry name" value="Immunoglobulins"/>
    <property type="match status" value="4"/>
</dbReference>
<dbReference type="InterPro" id="IPR003961">
    <property type="entry name" value="FN3_dom"/>
</dbReference>
<dbReference type="InterPro" id="IPR036116">
    <property type="entry name" value="FN3_sf"/>
</dbReference>
<dbReference type="InterPro" id="IPR013783">
    <property type="entry name" value="Ig-like_fold"/>
</dbReference>
<dbReference type="InterPro" id="IPR015373">
    <property type="entry name" value="Interferon/interleukin_rcp_dom"/>
</dbReference>
<dbReference type="InterPro" id="IPR016669">
    <property type="entry name" value="Interferon_alpha/beta_rcpt-1"/>
</dbReference>
<dbReference type="InterPro" id="IPR050650">
    <property type="entry name" value="Type-II_Cytokine-TF_Rcpt"/>
</dbReference>
<dbReference type="PANTHER" id="PTHR20859:SF54">
    <property type="entry name" value="INTERFERON ALPHA_BETA RECEPTOR 1"/>
    <property type="match status" value="1"/>
</dbReference>
<dbReference type="PANTHER" id="PTHR20859">
    <property type="entry name" value="INTERFERON/INTERLEUKIN RECEPTOR"/>
    <property type="match status" value="1"/>
</dbReference>
<dbReference type="Pfam" id="PF09294">
    <property type="entry name" value="Interfer-bind"/>
    <property type="match status" value="2"/>
</dbReference>
<dbReference type="Pfam" id="PF01108">
    <property type="entry name" value="Tissue_fac"/>
    <property type="match status" value="1"/>
</dbReference>
<dbReference type="PIRSF" id="PIRSF016567">
    <property type="entry name" value="IFN_alpha/beta_recept-1"/>
    <property type="match status" value="1"/>
</dbReference>
<dbReference type="SMART" id="SM00060">
    <property type="entry name" value="FN3"/>
    <property type="match status" value="3"/>
</dbReference>
<dbReference type="SUPFAM" id="SSF49265">
    <property type="entry name" value="Fibronectin type III"/>
    <property type="match status" value="4"/>
</dbReference>
<dbReference type="PROSITE" id="PS50853">
    <property type="entry name" value="FN3"/>
    <property type="match status" value="3"/>
</dbReference>
<keyword id="KW-1003">Cell membrane</keyword>
<keyword id="KW-1015">Disulfide bond</keyword>
<keyword id="KW-0967">Endosome</keyword>
<keyword id="KW-0325">Glycoprotein</keyword>
<keyword id="KW-0449">Lipoprotein</keyword>
<keyword id="KW-0458">Lysosome</keyword>
<keyword id="KW-0472">Membrane</keyword>
<keyword id="KW-0564">Palmitate</keyword>
<keyword id="KW-0597">Phosphoprotein</keyword>
<keyword id="KW-0675">Receptor</keyword>
<keyword id="KW-1185">Reference proteome</keyword>
<keyword id="KW-0677">Repeat</keyword>
<keyword id="KW-0732">Signal</keyword>
<keyword id="KW-0812">Transmembrane</keyword>
<keyword id="KW-1133">Transmembrane helix</keyword>
<keyword id="KW-0832">Ubl conjugation</keyword>
<evidence type="ECO:0000250" key="1">
    <source>
        <dbReference type="UniProtKB" id="P17181"/>
    </source>
</evidence>
<evidence type="ECO:0000250" key="2">
    <source>
        <dbReference type="UniProtKB" id="P33896"/>
    </source>
</evidence>
<evidence type="ECO:0000255" key="3"/>
<evidence type="ECO:0000255" key="4">
    <source>
        <dbReference type="PROSITE-ProRule" id="PRU00316"/>
    </source>
</evidence>
<evidence type="ECO:0000256" key="5">
    <source>
        <dbReference type="SAM" id="MobiDB-lite"/>
    </source>
</evidence>
<evidence type="ECO:0000269" key="6">
    <source>
    </source>
</evidence>
<evidence type="ECO:0000269" key="7">
    <source>
    </source>
</evidence>
<evidence type="ECO:0000305" key="8"/>
<feature type="signal peptide" evidence="3">
    <location>
        <begin position="1"/>
        <end position="24"/>
    </location>
</feature>
<feature type="chain" id="PRO_0000011004" description="Interferon alpha/beta receptor 1">
    <location>
        <begin position="25"/>
        <end position="560"/>
    </location>
</feature>
<feature type="topological domain" description="Extracellular" evidence="3">
    <location>
        <begin position="25"/>
        <end position="437"/>
    </location>
</feature>
<feature type="transmembrane region" description="Helical" evidence="3">
    <location>
        <begin position="438"/>
        <end position="458"/>
    </location>
</feature>
<feature type="topological domain" description="Cytoplasmic" evidence="3">
    <location>
        <begin position="459"/>
        <end position="560"/>
    </location>
</feature>
<feature type="domain" description="Fibronectin type-III 1" evidence="4">
    <location>
        <begin position="126"/>
        <end position="226"/>
    </location>
</feature>
<feature type="domain" description="Fibronectin type-III 2" evidence="4">
    <location>
        <begin position="231"/>
        <end position="329"/>
    </location>
</feature>
<feature type="domain" description="Fibronectin type-III 3" evidence="4">
    <location>
        <begin position="333"/>
        <end position="433"/>
    </location>
</feature>
<feature type="region of interest" description="Important for interaction with TYK2" evidence="1">
    <location>
        <begin position="492"/>
        <end position="501"/>
    </location>
</feature>
<feature type="region of interest" description="Disordered" evidence="5">
    <location>
        <begin position="524"/>
        <end position="560"/>
    </location>
</feature>
<feature type="compositionally biased region" description="Polar residues" evidence="5">
    <location>
        <begin position="529"/>
        <end position="540"/>
    </location>
</feature>
<feature type="modified residue" description="Phosphotyrosine; by TYK2" evidence="1">
    <location>
        <position position="467"/>
    </location>
</feature>
<feature type="modified residue" description="Phosphotyrosine; by TYK2" evidence="1">
    <location>
        <position position="482"/>
    </location>
</feature>
<feature type="modified residue" description="Phosphoserine" evidence="1">
    <location>
        <position position="496"/>
    </location>
</feature>
<feature type="modified residue" description="Phosphoserine" evidence="1">
    <location>
        <position position="536"/>
    </location>
</feature>
<feature type="lipid moiety-binding region" description="S-palmitoyl cysteine" evidence="1">
    <location>
        <position position="464"/>
    </location>
</feature>
<feature type="glycosylation site" description="N-linked (GlcNAc...) asparagine" evidence="3">
    <location>
        <position position="47"/>
    </location>
</feature>
<feature type="glycosylation site" description="N-linked (GlcNAc...) asparagine" evidence="3">
    <location>
        <position position="55"/>
    </location>
</feature>
<feature type="glycosylation site" description="N-linked (GlcNAc...) asparagine" evidence="3">
    <location>
        <position position="85"/>
    </location>
</feature>
<feature type="glycosylation site" description="N-linked (GlcNAc...) asparagine" evidence="3">
    <location>
        <position position="108"/>
    </location>
</feature>
<feature type="glycosylation site" description="N-linked (GlcNAc...) asparagine" evidence="3">
    <location>
        <position position="109"/>
    </location>
</feature>
<feature type="glycosylation site" description="N-linked (GlcNAc...) asparagine" evidence="3">
    <location>
        <position position="172"/>
    </location>
</feature>
<feature type="glycosylation site" description="N-linked (GlcNAc...) asparagine" evidence="3">
    <location>
        <position position="222"/>
    </location>
</feature>
<feature type="glycosylation site" description="N-linked (GlcNAc...) asparagine" evidence="3">
    <location>
        <position position="285"/>
    </location>
</feature>
<feature type="glycosylation site" description="N-linked (GlcNAc...) asparagine" evidence="3">
    <location>
        <position position="313"/>
    </location>
</feature>
<feature type="glycosylation site" description="N-linked (GlcNAc...) asparagine" evidence="3">
    <location>
        <position position="359"/>
    </location>
</feature>
<feature type="glycosylation site" description="N-linked (GlcNAc...) asparagine" evidence="3">
    <location>
        <position position="377"/>
    </location>
</feature>
<feature type="glycosylation site" description="N-linked (GlcNAc...) asparagine" evidence="3">
    <location>
        <position position="434"/>
    </location>
</feature>
<feature type="disulfide bond" evidence="1">
    <location>
        <begin position="76"/>
        <end position="84"/>
    </location>
</feature>
<feature type="disulfide bond" evidence="1">
    <location>
        <begin position="199"/>
        <end position="220"/>
    </location>
</feature>
<feature type="disulfide bond" evidence="1">
    <location>
        <begin position="283"/>
        <end position="291"/>
    </location>
</feature>
<feature type="disulfide bond" evidence="2">
    <location>
        <begin position="404"/>
        <end position="427"/>
    </location>
</feature>
<feature type="sequence conflict" description="In Ref. 2; AAB84231." evidence="8" ref="2">
    <original>S</original>
    <variation>G</variation>
    <location>
        <position position="352"/>
    </location>
</feature>
<feature type="sequence conflict" description="In Ref. 2; AAB84231." evidence="8" ref="2">
    <original>A</original>
    <variation>D</variation>
    <location>
        <position position="522"/>
    </location>
</feature>
<accession>Q28589</accession>
<accession>Q95206</accession>
<comment type="function">
    <text evidence="1 2">Together with IFNAR2, forms the heterodimeric receptor for type I interferons (including interferons alpha, beta, epsilon, omega and kappa). Type I interferon binding activates the JAK-STAT signaling cascade, resulting in transcriptional activation or repression of interferon-regulated genes that encode the effectors of the interferon response. Mechanistically, type I interferon-binding brings the IFNAR1 and IFNAR2 subunits into close proximity with one another, driving their associated Janus kinases (JAKs) (TYK2 bound to IFNAR1 and JAK1 bound to IFNAR2) to cross-phosphorylate one another. The activated kinases phosphorylate specific tyrosine residues on the intracellular domains of IFNAR1 and IFNAR2, forming docking sites for the STAT transcription factors. STAT proteins are then phosphorylated by the JAKs, promoting their translocation into the nucleus to regulate expression of interferon-regulated genes (By similarity). Can also act independently of IFNAR2: form an active IFNB1 receptor by itself and activate a signaling cascade that does not involve activation of the JAK-STAT pathway (By similarity).</text>
</comment>
<comment type="subunit">
    <text evidence="1">Heterodimer with IFNAR2; forming the receptor for type I interferon. Interacts with TYK2. Interacts with STAT1 and STAT2; the interaction requires its phosphorylation at Tyr-482. Interacts (serine-phosphorylated form) with FBXW11, the substrate recognition component of a SCF (SKP1-CUL1-F-box protein) E3 ubiquitin-protein ligase complex. Interacts with SHMT2; this promotes interaction with ABRAXAS2 and the BRISC complex. Interacts with TRIM10; this interaction prevents association between IFNAR1 and TYK2.</text>
</comment>
<comment type="subcellular location">
    <subcellularLocation>
        <location evidence="1">Cell membrane</location>
        <topology evidence="1">Single-pass type I membrane protein</topology>
    </subcellularLocation>
    <subcellularLocation>
        <location evidence="1">Late endosome</location>
    </subcellularLocation>
    <subcellularLocation>
        <location evidence="1">Lysosome</location>
    </subcellularLocation>
    <text evidence="1">Interferon binding triggers internalization of the receptor from the cell membrane into endosomes and then into lysosomes.</text>
</comment>
<comment type="tissue specificity">
    <text evidence="6 7">Expressed in the endometrium. Expressed in all tissues examined except conceptus at day 15 of pregnancy.</text>
</comment>
<comment type="PTM">
    <text evidence="1">Ubiquitinated, leading to its internalization and degradation. Polyubiquitinated via 'Lys-48'-linked and 'Lys-63'-linked ubiquitin chains, leading to receptor internalization and lysosomal degradation. The 'Lys-63'-linked ubiquitin chains are cleaved off by the BRISC complex.</text>
</comment>
<comment type="PTM">
    <text evidence="1">Phosphorylated on tyrosine residues in response to interferon-binding: phosphorylation by TYK2 tyrosine kinase creates docking sites for STAT proteins. Phosphorylated on serine residues in response to interferon binding; this promotes interaction with FBXW11 and ubiquitination.</text>
</comment>
<comment type="PTM">
    <text evidence="1">Palmitoylation at Cys-464 is required for the activation of STAT1 and STAT2.</text>
</comment>
<comment type="similarity">
    <text evidence="8">Belongs to the type II cytokine receptor family.</text>
</comment>
<sequence length="560" mass="63918">MLSLLGATTLMLVAGRWVLPAASGEANLKSENVEIHIIDDNFFLKWNSSSESVRNVTFSADYQILGTDNWKKLPGCQHITSSKCNFSSVELKDVFEKIELRIRAEEGNNTSTWYEVEPFVPFLKAQIGPPDVHLEAEDKAIILSISPPGTEDSIMWALDRSSFRYSVVIWKNSSSLEERTETVYPEDKIYKLSPEITYCLKVKAELRLQSRVGCYSPVYCINTTERHKVPSPENVQINVDNQAYVLKWDYPYESTTFQAQWLRAFLKKIPGKHSNKWKQIPNCENVTTTHCVFPRDIFSMGIYYVRVRASNGNGTSFWSEEKEFNTEVKPIIFPPVISMKSITDDSLHVSVSASEESENMSVNQLYPLVYEVIFWENTSNAERKVLEKRTDFTFPNLKPLTVYCVKARALIENDRWNKGSSYSDTVCEKTKPGNTSKTWLIAGICTALFSILVVIYVVRVFLRCVKYVFFPSSKPPSSVDQYFSDQPLRNLLLSTSEEQTERCFIIENASIITEIEETNEVAEVHEEYNSQASQDSGNYSNEDENSGSKISEEFLQQDSV</sequence>
<reference key="1">
    <citation type="journal article" date="1996" name="J. Mol. Endocrinol.">
        <title>Structure of an ovine interferon receptor and its expression in endometrium.</title>
        <authorList>
            <person name="Kaluz S."/>
            <person name="Fisher P.A."/>
            <person name="Kaluzova M."/>
            <person name="Sheldrick E.L."/>
            <person name="Flint A.P.F."/>
        </authorList>
    </citation>
    <scope>NUCLEOTIDE SEQUENCE [MRNA]</scope>
    <scope>TISSUE SPECIFICITY</scope>
    <source>
        <tissue>Endometrium</tissue>
    </source>
</reference>
<reference key="2">
    <citation type="journal article" date="1997" name="Endocrinology">
        <title>Molecular cloning of ovine and bovine type I interferon receptor subunits from uteri, and endometrial expression of messenger ribonucleic acid for ovine receptors during the estrous cycle and pregnancy.</title>
        <authorList>
            <person name="Han C.-S."/>
            <person name="Mathialagan N."/>
            <person name="Klemann S.W."/>
            <person name="Roberts R.M."/>
        </authorList>
    </citation>
    <scope>NUCLEOTIDE SEQUENCE [MRNA]</scope>
    <scope>TISSUE SPECIFICITY</scope>
    <source>
        <tissue>Endometrium</tissue>
    </source>
</reference>
<organism>
    <name type="scientific">Ovis aries</name>
    <name type="common">Sheep</name>
    <dbReference type="NCBI Taxonomy" id="9940"/>
    <lineage>
        <taxon>Eukaryota</taxon>
        <taxon>Metazoa</taxon>
        <taxon>Chordata</taxon>
        <taxon>Craniata</taxon>
        <taxon>Vertebrata</taxon>
        <taxon>Euteleostomi</taxon>
        <taxon>Mammalia</taxon>
        <taxon>Eutheria</taxon>
        <taxon>Laurasiatheria</taxon>
        <taxon>Artiodactyla</taxon>
        <taxon>Ruminantia</taxon>
        <taxon>Pecora</taxon>
        <taxon>Bovidae</taxon>
        <taxon>Caprinae</taxon>
        <taxon>Ovis</taxon>
    </lineage>
</organism>